<name>TX31A_SCOAL</name>
<reference key="1">
    <citation type="journal article" date="2014" name="Mol. Biol. Evol.">
        <title>Clawing through evolution: toxin diversification and convergence in the ancient lineage Chilopoda (centipedes).</title>
        <authorList>
            <person name="Undheim E.A."/>
            <person name="Jones A."/>
            <person name="Clauser K.R."/>
            <person name="Holland J.W."/>
            <person name="Pineda S.S."/>
            <person name="King G.F."/>
            <person name="Fry B.G."/>
        </authorList>
    </citation>
    <scope>NUCLEOTIDE SEQUENCE [MRNA]</scope>
    <scope>NOMENCLATURE</scope>
    <source>
        <tissue>Venom gland</tissue>
    </source>
</reference>
<sequence length="79" mass="9342">MAILLVMALIMFSLDKCYSTDDKCEDSLRREIACAKCRDRVRTDDYFMNVAHLNLHLKSVRRCCTNDLHCFLRYKTSEM</sequence>
<comment type="subcellular location">
    <subcellularLocation>
        <location evidence="4">Secreted</location>
    </subcellularLocation>
</comment>
<comment type="tissue specificity">
    <text evidence="4">Expressed by the venom gland.</text>
</comment>
<comment type="PTM">
    <text evidence="3">Contains 3 disulfide bonds.</text>
</comment>
<comment type="similarity">
    <text evidence="3">Belongs to the scoloptoxin-03 family.</text>
</comment>
<comment type="caution">
    <text evidence="4">All S.alternans family members described in 'Undeheim et al., 2014' have not been imported into UniProtKB. Please, refer to this paper to access them.</text>
</comment>
<comment type="online information" name="National Center for Biotechnology Information (NCBI)">
    <link uri="https://www.ncbi.nlm.nih.gov/nuccore/GASK01000046"/>
</comment>
<keyword id="KW-1015">Disulfide bond</keyword>
<keyword id="KW-0964">Secreted</keyword>
<keyword id="KW-0732">Signal</keyword>
<keyword id="KW-0800">Toxin</keyword>
<proteinExistence type="inferred from homology"/>
<dbReference type="GO" id="GO:0005576">
    <property type="term" value="C:extracellular region"/>
    <property type="evidence" value="ECO:0007669"/>
    <property type="project" value="UniProtKB-SubCell"/>
</dbReference>
<dbReference type="GO" id="GO:0090729">
    <property type="term" value="F:toxin activity"/>
    <property type="evidence" value="ECO:0007669"/>
    <property type="project" value="UniProtKB-KW"/>
</dbReference>
<dbReference type="Gene3D" id="1.10.60.50">
    <property type="match status" value="1"/>
</dbReference>
<organism>
    <name type="scientific">Scolopendra alternans</name>
    <name type="common">Florida Keys giant centipede</name>
    <dbReference type="NCBI Taxonomy" id="1329349"/>
    <lineage>
        <taxon>Eukaryota</taxon>
        <taxon>Metazoa</taxon>
        <taxon>Ecdysozoa</taxon>
        <taxon>Arthropoda</taxon>
        <taxon>Myriapoda</taxon>
        <taxon>Chilopoda</taxon>
        <taxon>Pleurostigmophora</taxon>
        <taxon>Scolopendromorpha</taxon>
        <taxon>Scolopendridae</taxon>
        <taxon>Scolopendra</taxon>
    </lineage>
</organism>
<feature type="signal peptide" evidence="1">
    <location>
        <begin position="1"/>
        <end position="19"/>
    </location>
</feature>
<feature type="chain" id="PRO_0000446694" description="U-scoloptoxin(03)-Sa1a" evidence="3">
    <location>
        <begin position="20"/>
        <end position="79"/>
    </location>
</feature>
<evidence type="ECO:0000255" key="1"/>
<evidence type="ECO:0000303" key="2">
    <source>
    </source>
</evidence>
<evidence type="ECO:0000305" key="3"/>
<evidence type="ECO:0000305" key="4">
    <source>
    </source>
</evidence>
<accession>P0DPW7</accession>
<protein>
    <recommendedName>
        <fullName evidence="2">U-scoloptoxin(03)-Sa1a</fullName>
        <shortName evidence="2">U-SLPTX(03)-Sa1a</shortName>
    </recommendedName>
</protein>